<keyword id="KW-0030">Aminoacyl-tRNA synthetase</keyword>
<keyword id="KW-0067">ATP-binding</keyword>
<keyword id="KW-0963">Cytoplasm</keyword>
<keyword id="KW-0436">Ligase</keyword>
<keyword id="KW-0479">Metal-binding</keyword>
<keyword id="KW-0547">Nucleotide-binding</keyword>
<keyword id="KW-0648">Protein biosynthesis</keyword>
<keyword id="KW-1185">Reference proteome</keyword>
<keyword id="KW-0694">RNA-binding</keyword>
<keyword id="KW-0820">tRNA-binding</keyword>
<keyword id="KW-0862">Zinc</keyword>
<reference key="1">
    <citation type="journal article" date="2006" name="Proc. Natl. Acad. Sci. U.S.A.">
        <title>Genomic analysis of the uncultivated marine crenarchaeote Cenarchaeum symbiosum.</title>
        <authorList>
            <person name="Hallam S.J."/>
            <person name="Konstantinidis K.T."/>
            <person name="Putnam N."/>
            <person name="Schleper C."/>
            <person name="Watanabe Y."/>
            <person name="Sugahara J."/>
            <person name="Preston C."/>
            <person name="de la Torre J."/>
            <person name="Richardson P.M."/>
            <person name="DeLong E.F."/>
        </authorList>
    </citation>
    <scope>NUCLEOTIDE SEQUENCE [LARGE SCALE GENOMIC DNA]</scope>
    <source>
        <strain>A</strain>
    </source>
</reference>
<sequence>MEKQEILREFSSDPEKYYTVRLFREEGFERRACSVCGRYFWALDGRPACPEDSDDTYSFIGDPPAPRAYDYAQAWRTIEEYFVKNGHESVPRYPVVCRWRDDLYFTIASIVDFQRVMGSSVVFEFPANPLVVPQTCLRFKDLENVGVTGRHFSSFCMIGQHAVPGNGGYWKDECIDLDYGLLVRQLGIPKEEVVFVEDVWAGGGSFGPSLEYYVRGLELGNAVFTEFQGELGNHTTLDRRIIDMGAGLERFAWITTGTPTAYDCCFGPVMGRLAESLGADQDSAELAAYYTRVAVNLGRCGDLNEARRRSAQEAGISDSRMAGAIAPLGEAYMVADHIRTLIFAISDGALPSNVGGGYNLRMMLRRVAGAMERTFPGLDLDELVDLHIDYLMGTYPELDGARQDVKTILDIEASRYGDSKERMGKITAKITDRGRAPGVDELVTLYESDGITPEYLIEAGAIQEVPPEFYSRLDELHAPPPKAAGPGPELAGLADTEMLFYGEDPPEFEARVMHSSDGGVVLDRTSFYARGGGQEPDHGTIGGFRVTDVSKHGGIILHRLDGGSLAEGSTVRCIRDEKRRAGITRNHTSTHILNASARGVLGSWVWQHSAFKEEDHARLDITHHSPLSAAEVKKIEAAANGIVKEDRGVSIGYHPRGEAEQKYGFRIYQGGVVPVSTVRIVTIKGYDDEACGGTHVKSTGEVGLIRITRTKRIQDGVVRLEFVSGDAAIEHERTAAARAEGDRAAEEAKGRLQEERDAGRLKSREIIPGMLEEITGGGSAEGMEVATGPGGRRCLAAGIHDEYFHTSFGKKLVAMDPACAYCAIFEAGPTVRVLAYAGSKSGAGADEIVREVSAVLGGSGGGAAGFAQGGGKDSSKMAEAVARARVLLFGGDNT</sequence>
<feature type="chain" id="PRO_0000347878" description="Alanine--tRNA ligase">
    <location>
        <begin position="1"/>
        <end position="894"/>
    </location>
</feature>
<feature type="region of interest" description="Disordered" evidence="2">
    <location>
        <begin position="739"/>
        <end position="758"/>
    </location>
</feature>
<feature type="binding site" evidence="1">
    <location>
        <position position="587"/>
    </location>
    <ligand>
        <name>Zn(2+)</name>
        <dbReference type="ChEBI" id="CHEBI:29105"/>
    </ligand>
</feature>
<feature type="binding site" evidence="1">
    <location>
        <position position="591"/>
    </location>
    <ligand>
        <name>Zn(2+)</name>
        <dbReference type="ChEBI" id="CHEBI:29105"/>
    </ligand>
</feature>
<feature type="binding site" evidence="1">
    <location>
        <position position="691"/>
    </location>
    <ligand>
        <name>Zn(2+)</name>
        <dbReference type="ChEBI" id="CHEBI:29105"/>
    </ligand>
</feature>
<feature type="binding site" evidence="1">
    <location>
        <position position="695"/>
    </location>
    <ligand>
        <name>Zn(2+)</name>
        <dbReference type="ChEBI" id="CHEBI:29105"/>
    </ligand>
</feature>
<dbReference type="EC" id="6.1.1.7" evidence="1"/>
<dbReference type="EMBL" id="DP000238">
    <property type="protein sequence ID" value="ABK77877.1"/>
    <property type="molecule type" value="Genomic_DNA"/>
</dbReference>
<dbReference type="SMR" id="A0RX10"/>
<dbReference type="STRING" id="414004.CENSYa_1254"/>
<dbReference type="EnsemblBacteria" id="ABK77877">
    <property type="protein sequence ID" value="ABK77877"/>
    <property type="gene ID" value="CENSYa_1254"/>
</dbReference>
<dbReference type="KEGG" id="csy:CENSYa_1254"/>
<dbReference type="PATRIC" id="fig|414004.10.peg.1141"/>
<dbReference type="HOGENOM" id="CLU_004485_4_0_2"/>
<dbReference type="Proteomes" id="UP000000758">
    <property type="component" value="Chromosome"/>
</dbReference>
<dbReference type="GO" id="GO:0005737">
    <property type="term" value="C:cytoplasm"/>
    <property type="evidence" value="ECO:0007669"/>
    <property type="project" value="UniProtKB-SubCell"/>
</dbReference>
<dbReference type="GO" id="GO:0004813">
    <property type="term" value="F:alanine-tRNA ligase activity"/>
    <property type="evidence" value="ECO:0007669"/>
    <property type="project" value="UniProtKB-UniRule"/>
</dbReference>
<dbReference type="GO" id="GO:0002161">
    <property type="term" value="F:aminoacyl-tRNA deacylase activity"/>
    <property type="evidence" value="ECO:0007669"/>
    <property type="project" value="TreeGrafter"/>
</dbReference>
<dbReference type="GO" id="GO:0005524">
    <property type="term" value="F:ATP binding"/>
    <property type="evidence" value="ECO:0007669"/>
    <property type="project" value="UniProtKB-UniRule"/>
</dbReference>
<dbReference type="GO" id="GO:0000049">
    <property type="term" value="F:tRNA binding"/>
    <property type="evidence" value="ECO:0007669"/>
    <property type="project" value="UniProtKB-KW"/>
</dbReference>
<dbReference type="GO" id="GO:0008270">
    <property type="term" value="F:zinc ion binding"/>
    <property type="evidence" value="ECO:0007669"/>
    <property type="project" value="UniProtKB-UniRule"/>
</dbReference>
<dbReference type="GO" id="GO:0006419">
    <property type="term" value="P:alanyl-tRNA aminoacylation"/>
    <property type="evidence" value="ECO:0007669"/>
    <property type="project" value="UniProtKB-UniRule"/>
</dbReference>
<dbReference type="FunFam" id="3.30.54.20:FF:000004">
    <property type="entry name" value="Alanine--tRNA ligase"/>
    <property type="match status" value="1"/>
</dbReference>
<dbReference type="FunFam" id="3.30.980.10:FF:000004">
    <property type="entry name" value="Alanine--tRNA ligase, cytoplasmic"/>
    <property type="match status" value="1"/>
</dbReference>
<dbReference type="Gene3D" id="2.40.30.130">
    <property type="match status" value="1"/>
</dbReference>
<dbReference type="Gene3D" id="3.10.310.40">
    <property type="match status" value="1"/>
</dbReference>
<dbReference type="Gene3D" id="3.30.54.20">
    <property type="match status" value="1"/>
</dbReference>
<dbReference type="Gene3D" id="3.30.930.10">
    <property type="entry name" value="Bira Bifunctional Protein, Domain 2"/>
    <property type="match status" value="1"/>
</dbReference>
<dbReference type="Gene3D" id="3.30.980.10">
    <property type="entry name" value="Threonyl-trna Synthetase, Chain A, domain 2"/>
    <property type="match status" value="1"/>
</dbReference>
<dbReference type="HAMAP" id="MF_00036_A">
    <property type="entry name" value="Ala_tRNA_synth_A"/>
    <property type="match status" value="1"/>
</dbReference>
<dbReference type="InterPro" id="IPR045864">
    <property type="entry name" value="aa-tRNA-synth_II/BPL/LPL"/>
</dbReference>
<dbReference type="InterPro" id="IPR002318">
    <property type="entry name" value="Ala-tRNA-lgiase_IIc"/>
</dbReference>
<dbReference type="InterPro" id="IPR018162">
    <property type="entry name" value="Ala-tRNA-ligase_IIc_anticod-bd"/>
</dbReference>
<dbReference type="InterPro" id="IPR018165">
    <property type="entry name" value="Ala-tRNA-synth_IIc_core"/>
</dbReference>
<dbReference type="InterPro" id="IPR018164">
    <property type="entry name" value="Ala-tRNA-synth_IIc_N"/>
</dbReference>
<dbReference type="InterPro" id="IPR022429">
    <property type="entry name" value="Ala-tRNA_lgiase_arc"/>
</dbReference>
<dbReference type="InterPro" id="IPR050058">
    <property type="entry name" value="Ala-tRNA_ligase"/>
</dbReference>
<dbReference type="InterPro" id="IPR018163">
    <property type="entry name" value="Thr/Ala-tRNA-synth_IIc_edit"/>
</dbReference>
<dbReference type="InterPro" id="IPR009000">
    <property type="entry name" value="Transl_B-barrel_sf"/>
</dbReference>
<dbReference type="InterPro" id="IPR012947">
    <property type="entry name" value="tRNA_SAD"/>
</dbReference>
<dbReference type="NCBIfam" id="TIGR03683">
    <property type="entry name" value="A-tRNA_syn_arch"/>
    <property type="match status" value="1"/>
</dbReference>
<dbReference type="PANTHER" id="PTHR11777:SF9">
    <property type="entry name" value="ALANINE--TRNA LIGASE, CYTOPLASMIC"/>
    <property type="match status" value="1"/>
</dbReference>
<dbReference type="PANTHER" id="PTHR11777">
    <property type="entry name" value="ALANYL-TRNA SYNTHETASE"/>
    <property type="match status" value="1"/>
</dbReference>
<dbReference type="Pfam" id="PF01411">
    <property type="entry name" value="tRNA-synt_2c"/>
    <property type="match status" value="2"/>
</dbReference>
<dbReference type="Pfam" id="PF07973">
    <property type="entry name" value="tRNA_SAD"/>
    <property type="match status" value="1"/>
</dbReference>
<dbReference type="PRINTS" id="PR00980">
    <property type="entry name" value="TRNASYNTHALA"/>
</dbReference>
<dbReference type="SMART" id="SM00863">
    <property type="entry name" value="tRNA_SAD"/>
    <property type="match status" value="1"/>
</dbReference>
<dbReference type="SUPFAM" id="SSF55681">
    <property type="entry name" value="Class II aaRS and biotin synthetases"/>
    <property type="match status" value="1"/>
</dbReference>
<dbReference type="SUPFAM" id="SSF101353">
    <property type="entry name" value="Putative anticodon-binding domain of alanyl-tRNA synthetase (AlaRS)"/>
    <property type="match status" value="1"/>
</dbReference>
<dbReference type="SUPFAM" id="SSF55186">
    <property type="entry name" value="ThrRS/AlaRS common domain"/>
    <property type="match status" value="1"/>
</dbReference>
<dbReference type="SUPFAM" id="SSF50447">
    <property type="entry name" value="Translation proteins"/>
    <property type="match status" value="1"/>
</dbReference>
<dbReference type="PROSITE" id="PS50860">
    <property type="entry name" value="AA_TRNA_LIGASE_II_ALA"/>
    <property type="match status" value="1"/>
</dbReference>
<protein>
    <recommendedName>
        <fullName evidence="1">Alanine--tRNA ligase</fullName>
        <ecNumber evidence="1">6.1.1.7</ecNumber>
    </recommendedName>
    <alternativeName>
        <fullName evidence="1">Alanyl-tRNA synthetase</fullName>
        <shortName evidence="1">AlaRS</shortName>
    </alternativeName>
</protein>
<comment type="function">
    <text evidence="1">Catalyzes the attachment of alanine to tRNA(Ala) in a two-step reaction: alanine is first activated by ATP to form Ala-AMP and then transferred to the acceptor end of tRNA(Ala). Also edits incorrectly charged Ser-tRNA(Ala) and Gly-tRNA(Ala) via its editing domain.</text>
</comment>
<comment type="catalytic activity">
    <reaction evidence="1">
        <text>tRNA(Ala) + L-alanine + ATP = L-alanyl-tRNA(Ala) + AMP + diphosphate</text>
        <dbReference type="Rhea" id="RHEA:12540"/>
        <dbReference type="Rhea" id="RHEA-COMP:9657"/>
        <dbReference type="Rhea" id="RHEA-COMP:9923"/>
        <dbReference type="ChEBI" id="CHEBI:30616"/>
        <dbReference type="ChEBI" id="CHEBI:33019"/>
        <dbReference type="ChEBI" id="CHEBI:57972"/>
        <dbReference type="ChEBI" id="CHEBI:78442"/>
        <dbReference type="ChEBI" id="CHEBI:78497"/>
        <dbReference type="ChEBI" id="CHEBI:456215"/>
        <dbReference type="EC" id="6.1.1.7"/>
    </reaction>
</comment>
<comment type="cofactor">
    <cofactor evidence="1">
        <name>Zn(2+)</name>
        <dbReference type="ChEBI" id="CHEBI:29105"/>
    </cofactor>
    <text evidence="1">Binds 1 zinc ion per subunit.</text>
</comment>
<comment type="subcellular location">
    <subcellularLocation>
        <location evidence="1">Cytoplasm</location>
    </subcellularLocation>
</comment>
<comment type="domain">
    <text evidence="1">Consists of three domains; the N-terminal catalytic domain, the editing domain and the C-terminal C-Ala domain. The editing domain removes incorrectly charged amino acids, while the C-Ala domain, along with tRNA(Ala), serves as a bridge to cooperatively bring together the editing and aminoacylation centers thus stimulating deacylation of misacylated tRNAs.</text>
</comment>
<comment type="similarity">
    <text evidence="1">Belongs to the class-II aminoacyl-tRNA synthetase family.</text>
</comment>
<organism>
    <name type="scientific">Cenarchaeum symbiosum (strain A)</name>
    <dbReference type="NCBI Taxonomy" id="414004"/>
    <lineage>
        <taxon>Archaea</taxon>
        <taxon>Nitrososphaerota</taxon>
        <taxon>Candidatus Cenarchaeales</taxon>
        <taxon>Candidatus Cenarchaeaceae</taxon>
        <taxon>Candidatus Cenarchaeum</taxon>
    </lineage>
</organism>
<proteinExistence type="inferred from homology"/>
<name>SYA_CENSY</name>
<accession>A0RX10</accession>
<evidence type="ECO:0000255" key="1">
    <source>
        <dbReference type="HAMAP-Rule" id="MF_00036"/>
    </source>
</evidence>
<evidence type="ECO:0000256" key="2">
    <source>
        <dbReference type="SAM" id="MobiDB-lite"/>
    </source>
</evidence>
<gene>
    <name evidence="1" type="primary">alaS</name>
    <name type="ordered locus">CENSYa_1254</name>
</gene>